<feature type="chain" id="PRO_0000331041" description="SsrA-binding protein">
    <location>
        <begin position="1"/>
        <end position="156"/>
    </location>
</feature>
<dbReference type="EMBL" id="AP008230">
    <property type="protein sequence ID" value="BAE86624.1"/>
    <property type="molecule type" value="Genomic_DNA"/>
</dbReference>
<dbReference type="RefSeq" id="WP_005815658.1">
    <property type="nucleotide sequence ID" value="NC_007907.1"/>
</dbReference>
<dbReference type="SMR" id="Q24MW8"/>
<dbReference type="STRING" id="138119.DSY4835"/>
<dbReference type="KEGG" id="dsy:DSY4835"/>
<dbReference type="eggNOG" id="COG0691">
    <property type="taxonomic scope" value="Bacteria"/>
</dbReference>
<dbReference type="HOGENOM" id="CLU_108953_0_0_9"/>
<dbReference type="Proteomes" id="UP000001946">
    <property type="component" value="Chromosome"/>
</dbReference>
<dbReference type="GO" id="GO:0005829">
    <property type="term" value="C:cytosol"/>
    <property type="evidence" value="ECO:0007669"/>
    <property type="project" value="TreeGrafter"/>
</dbReference>
<dbReference type="GO" id="GO:0003723">
    <property type="term" value="F:RNA binding"/>
    <property type="evidence" value="ECO:0007669"/>
    <property type="project" value="UniProtKB-UniRule"/>
</dbReference>
<dbReference type="GO" id="GO:0070929">
    <property type="term" value="P:trans-translation"/>
    <property type="evidence" value="ECO:0007669"/>
    <property type="project" value="UniProtKB-UniRule"/>
</dbReference>
<dbReference type="CDD" id="cd09294">
    <property type="entry name" value="SmpB"/>
    <property type="match status" value="1"/>
</dbReference>
<dbReference type="Gene3D" id="2.40.280.10">
    <property type="match status" value="1"/>
</dbReference>
<dbReference type="HAMAP" id="MF_00023">
    <property type="entry name" value="SmpB"/>
    <property type="match status" value="1"/>
</dbReference>
<dbReference type="InterPro" id="IPR023620">
    <property type="entry name" value="SmpB"/>
</dbReference>
<dbReference type="InterPro" id="IPR000037">
    <property type="entry name" value="SsrA-bd_prot"/>
</dbReference>
<dbReference type="InterPro" id="IPR020081">
    <property type="entry name" value="SsrA-bd_prot_CS"/>
</dbReference>
<dbReference type="NCBIfam" id="NF003843">
    <property type="entry name" value="PRK05422.1"/>
    <property type="match status" value="1"/>
</dbReference>
<dbReference type="NCBIfam" id="TIGR00086">
    <property type="entry name" value="smpB"/>
    <property type="match status" value="1"/>
</dbReference>
<dbReference type="PANTHER" id="PTHR30308:SF2">
    <property type="entry name" value="SSRA-BINDING PROTEIN"/>
    <property type="match status" value="1"/>
</dbReference>
<dbReference type="PANTHER" id="PTHR30308">
    <property type="entry name" value="TMRNA-BINDING COMPONENT OF TRANS-TRANSLATION TAGGING COMPLEX"/>
    <property type="match status" value="1"/>
</dbReference>
<dbReference type="Pfam" id="PF01668">
    <property type="entry name" value="SmpB"/>
    <property type="match status" value="1"/>
</dbReference>
<dbReference type="SUPFAM" id="SSF74982">
    <property type="entry name" value="Small protein B (SmpB)"/>
    <property type="match status" value="1"/>
</dbReference>
<dbReference type="PROSITE" id="PS01317">
    <property type="entry name" value="SSRP"/>
    <property type="match status" value="1"/>
</dbReference>
<reference key="1">
    <citation type="journal article" date="2006" name="J. Bacteriol.">
        <title>Complete genome sequence of the dehalorespiring bacterium Desulfitobacterium hafniense Y51 and comparison with Dehalococcoides ethenogenes 195.</title>
        <authorList>
            <person name="Nonaka H."/>
            <person name="Keresztes G."/>
            <person name="Shinoda Y."/>
            <person name="Ikenaga Y."/>
            <person name="Abe M."/>
            <person name="Naito K."/>
            <person name="Inatomi K."/>
            <person name="Furukawa K."/>
            <person name="Inui M."/>
            <person name="Yukawa H."/>
        </authorList>
    </citation>
    <scope>NUCLEOTIDE SEQUENCE [LARGE SCALE GENOMIC DNA]</scope>
    <source>
        <strain>Y51</strain>
    </source>
</reference>
<gene>
    <name evidence="1" type="primary">smpB</name>
    <name type="ordered locus">DSY4835</name>
</gene>
<proteinExistence type="inferred from homology"/>
<evidence type="ECO:0000255" key="1">
    <source>
        <dbReference type="HAMAP-Rule" id="MF_00023"/>
    </source>
</evidence>
<keyword id="KW-0963">Cytoplasm</keyword>
<keyword id="KW-1185">Reference proteome</keyword>
<keyword id="KW-0694">RNA-binding</keyword>
<accession>Q24MW8</accession>
<comment type="function">
    <text evidence="1">Required for rescue of stalled ribosomes mediated by trans-translation. Binds to transfer-messenger RNA (tmRNA), required for stable association of tmRNA with ribosomes. tmRNA and SmpB together mimic tRNA shape, replacing the anticodon stem-loop with SmpB. tmRNA is encoded by the ssrA gene; the 2 termini fold to resemble tRNA(Ala) and it encodes a 'tag peptide', a short internal open reading frame. During trans-translation Ala-aminoacylated tmRNA acts like a tRNA, entering the A-site of stalled ribosomes, displacing the stalled mRNA. The ribosome then switches to translate the ORF on the tmRNA; the nascent peptide is terminated with the 'tag peptide' encoded by the tmRNA and targeted for degradation. The ribosome is freed to recommence translation, which seems to be the essential function of trans-translation.</text>
</comment>
<comment type="subcellular location">
    <subcellularLocation>
        <location evidence="1">Cytoplasm</location>
    </subcellularLocation>
    <text evidence="1">The tmRNA-SmpB complex associates with stalled 70S ribosomes.</text>
</comment>
<comment type="similarity">
    <text evidence="1">Belongs to the SmpB family.</text>
</comment>
<protein>
    <recommendedName>
        <fullName evidence="1">SsrA-binding protein</fullName>
    </recommendedName>
    <alternativeName>
        <fullName evidence="1">Small protein B</fullName>
    </alternativeName>
</protein>
<name>SSRP_DESHY</name>
<sequence>MASEGIKVISDNRKAYHDYFVEEKLEAGVILTGTEIKSIRNGRVNLKDSYARIENGEVWLYQLHISPYEQGNRFNHDPLRKRKLLLNRSEIIKLVGKVQQQGLTLIPTKIYLKRGLAKIELGVCRGKKNYDKRQDIAERDAKREIERHFRDQGKGY</sequence>
<organism>
    <name type="scientific">Desulfitobacterium hafniense (strain Y51)</name>
    <dbReference type="NCBI Taxonomy" id="138119"/>
    <lineage>
        <taxon>Bacteria</taxon>
        <taxon>Bacillati</taxon>
        <taxon>Bacillota</taxon>
        <taxon>Clostridia</taxon>
        <taxon>Eubacteriales</taxon>
        <taxon>Desulfitobacteriaceae</taxon>
        <taxon>Desulfitobacterium</taxon>
    </lineage>
</organism>